<feature type="chain" id="PRO_0000133905" description="Enolase 2">
    <location>
        <begin position="1"/>
        <end position="422"/>
    </location>
</feature>
<feature type="active site" description="Proton donor" evidence="1">
    <location>
        <position position="204"/>
    </location>
</feature>
<feature type="active site" description="Proton acceptor" evidence="1">
    <location>
        <position position="337"/>
    </location>
</feature>
<feature type="binding site" evidence="1">
    <location>
        <position position="162"/>
    </location>
    <ligand>
        <name>(2R)-2-phosphoglycerate</name>
        <dbReference type="ChEBI" id="CHEBI:58289"/>
    </ligand>
</feature>
<feature type="binding site" evidence="1">
    <location>
        <position position="241"/>
    </location>
    <ligand>
        <name>Mg(2+)</name>
        <dbReference type="ChEBI" id="CHEBI:18420"/>
    </ligand>
</feature>
<feature type="binding site" evidence="1">
    <location>
        <position position="285"/>
    </location>
    <ligand>
        <name>Mg(2+)</name>
        <dbReference type="ChEBI" id="CHEBI:18420"/>
    </ligand>
</feature>
<feature type="binding site" evidence="1">
    <location>
        <position position="312"/>
    </location>
    <ligand>
        <name>Mg(2+)</name>
        <dbReference type="ChEBI" id="CHEBI:18420"/>
    </ligand>
</feature>
<feature type="binding site" evidence="1">
    <location>
        <position position="337"/>
    </location>
    <ligand>
        <name>(2R)-2-phosphoglycerate</name>
        <dbReference type="ChEBI" id="CHEBI:58289"/>
    </ligand>
</feature>
<feature type="binding site" evidence="1">
    <location>
        <position position="366"/>
    </location>
    <ligand>
        <name>(2R)-2-phosphoglycerate</name>
        <dbReference type="ChEBI" id="CHEBI:58289"/>
    </ligand>
</feature>
<feature type="binding site" evidence="1">
    <location>
        <position position="367"/>
    </location>
    <ligand>
        <name>(2R)-2-phosphoglycerate</name>
        <dbReference type="ChEBI" id="CHEBI:58289"/>
    </ligand>
</feature>
<feature type="binding site" evidence="1">
    <location>
        <position position="388"/>
    </location>
    <ligand>
        <name>(2R)-2-phosphoglycerate</name>
        <dbReference type="ChEBI" id="CHEBI:58289"/>
    </ligand>
</feature>
<gene>
    <name evidence="1" type="primary">eno2</name>
    <name type="synonym">enoB</name>
    <name type="ordered locus">LL0276</name>
    <name type="ORF">L0008</name>
</gene>
<protein>
    <recommendedName>
        <fullName evidence="1">Enolase 2</fullName>
        <ecNumber evidence="1">4.2.1.11</ecNumber>
    </recommendedName>
    <alternativeName>
        <fullName evidence="1">2-phospho-D-glycerate hydro-lyase 2</fullName>
    </alternativeName>
    <alternativeName>
        <fullName evidence="1">2-phosphoglycerate dehydratase 2</fullName>
    </alternativeName>
</protein>
<reference key="1">
    <citation type="journal article" date="2001" name="Genome Res.">
        <title>The complete genome sequence of the lactic acid bacterium Lactococcus lactis ssp. lactis IL1403.</title>
        <authorList>
            <person name="Bolotin A."/>
            <person name="Wincker P."/>
            <person name="Mauger S."/>
            <person name="Jaillon O."/>
            <person name="Malarme K."/>
            <person name="Weissenbach J."/>
            <person name="Ehrlich S.D."/>
            <person name="Sorokin A."/>
        </authorList>
    </citation>
    <scope>NUCLEOTIDE SEQUENCE [LARGE SCALE GENOMIC DNA]</scope>
    <source>
        <strain>IL1403</strain>
    </source>
</reference>
<proteinExistence type="inferred from homology"/>
<evidence type="ECO:0000255" key="1">
    <source>
        <dbReference type="HAMAP-Rule" id="MF_00318"/>
    </source>
</evidence>
<keyword id="KW-0963">Cytoplasm</keyword>
<keyword id="KW-0324">Glycolysis</keyword>
<keyword id="KW-0456">Lyase</keyword>
<keyword id="KW-0460">Magnesium</keyword>
<keyword id="KW-0479">Metal-binding</keyword>
<keyword id="KW-1185">Reference proteome</keyword>
<keyword id="KW-0964">Secreted</keyword>
<comment type="function">
    <text evidence="1">Catalyzes the reversible conversion of 2-phosphoglycerate (2-PG) into phosphoenolpyruvate (PEP). It is essential for the degradation of carbohydrates via glycolysis.</text>
</comment>
<comment type="catalytic activity">
    <reaction evidence="1">
        <text>(2R)-2-phosphoglycerate = phosphoenolpyruvate + H2O</text>
        <dbReference type="Rhea" id="RHEA:10164"/>
        <dbReference type="ChEBI" id="CHEBI:15377"/>
        <dbReference type="ChEBI" id="CHEBI:58289"/>
        <dbReference type="ChEBI" id="CHEBI:58702"/>
        <dbReference type="EC" id="4.2.1.11"/>
    </reaction>
</comment>
<comment type="cofactor">
    <cofactor evidence="1">
        <name>Mg(2+)</name>
        <dbReference type="ChEBI" id="CHEBI:18420"/>
    </cofactor>
    <text evidence="1">Binds a second Mg(2+) ion via substrate during catalysis.</text>
</comment>
<comment type="pathway">
    <text evidence="1">Carbohydrate degradation; glycolysis; pyruvate from D-glyceraldehyde 3-phosphate: step 4/5.</text>
</comment>
<comment type="subcellular location">
    <subcellularLocation>
        <location evidence="1">Cytoplasm</location>
    </subcellularLocation>
    <subcellularLocation>
        <location evidence="1">Secreted</location>
    </subcellularLocation>
    <subcellularLocation>
        <location evidence="1">Cell surface</location>
    </subcellularLocation>
    <text evidence="1">Fractions of enolase are present in both the cytoplasm and on the cell surface.</text>
</comment>
<comment type="similarity">
    <text evidence="1">Belongs to the enolase family.</text>
</comment>
<accession>Q9CIT0</accession>
<organism>
    <name type="scientific">Lactococcus lactis subsp. lactis (strain IL1403)</name>
    <name type="common">Streptococcus lactis</name>
    <dbReference type="NCBI Taxonomy" id="272623"/>
    <lineage>
        <taxon>Bacteria</taxon>
        <taxon>Bacillati</taxon>
        <taxon>Bacillota</taxon>
        <taxon>Bacilli</taxon>
        <taxon>Lactobacillales</taxon>
        <taxon>Streptococcaceae</taxon>
        <taxon>Lactococcus</taxon>
    </lineage>
</organism>
<name>ENO2_LACLA</name>
<dbReference type="EC" id="4.2.1.11" evidence="1"/>
<dbReference type="EMBL" id="AE005176">
    <property type="protein sequence ID" value="AAK04374.1"/>
    <property type="molecule type" value="Genomic_DNA"/>
</dbReference>
<dbReference type="PIR" id="D86659">
    <property type="entry name" value="D86659"/>
</dbReference>
<dbReference type="RefSeq" id="NP_266432.1">
    <property type="nucleotide sequence ID" value="NC_002662.1"/>
</dbReference>
<dbReference type="SMR" id="Q9CIT0"/>
<dbReference type="PaxDb" id="272623-L0008"/>
<dbReference type="EnsemblBacteria" id="AAK04374">
    <property type="protein sequence ID" value="AAK04374"/>
    <property type="gene ID" value="L0008"/>
</dbReference>
<dbReference type="KEGG" id="lla:L0008"/>
<dbReference type="PATRIC" id="fig|272623.7.peg.302"/>
<dbReference type="eggNOG" id="COG0148">
    <property type="taxonomic scope" value="Bacteria"/>
</dbReference>
<dbReference type="HOGENOM" id="CLU_031223_2_1_9"/>
<dbReference type="OrthoDB" id="9804716at2"/>
<dbReference type="UniPathway" id="UPA00109">
    <property type="reaction ID" value="UER00187"/>
</dbReference>
<dbReference type="Proteomes" id="UP000002196">
    <property type="component" value="Chromosome"/>
</dbReference>
<dbReference type="GO" id="GO:0009986">
    <property type="term" value="C:cell surface"/>
    <property type="evidence" value="ECO:0007669"/>
    <property type="project" value="UniProtKB-SubCell"/>
</dbReference>
<dbReference type="GO" id="GO:0005576">
    <property type="term" value="C:extracellular region"/>
    <property type="evidence" value="ECO:0007669"/>
    <property type="project" value="UniProtKB-SubCell"/>
</dbReference>
<dbReference type="GO" id="GO:0009274">
    <property type="term" value="C:peptidoglycan-based cell wall"/>
    <property type="evidence" value="ECO:0007669"/>
    <property type="project" value="UniProtKB-ARBA"/>
</dbReference>
<dbReference type="GO" id="GO:0000015">
    <property type="term" value="C:phosphopyruvate hydratase complex"/>
    <property type="evidence" value="ECO:0007669"/>
    <property type="project" value="InterPro"/>
</dbReference>
<dbReference type="GO" id="GO:0000287">
    <property type="term" value="F:magnesium ion binding"/>
    <property type="evidence" value="ECO:0007669"/>
    <property type="project" value="UniProtKB-UniRule"/>
</dbReference>
<dbReference type="GO" id="GO:0004634">
    <property type="term" value="F:phosphopyruvate hydratase activity"/>
    <property type="evidence" value="ECO:0007669"/>
    <property type="project" value="UniProtKB-UniRule"/>
</dbReference>
<dbReference type="GO" id="GO:0006096">
    <property type="term" value="P:glycolytic process"/>
    <property type="evidence" value="ECO:0007669"/>
    <property type="project" value="UniProtKB-UniRule"/>
</dbReference>
<dbReference type="CDD" id="cd03313">
    <property type="entry name" value="enolase"/>
    <property type="match status" value="1"/>
</dbReference>
<dbReference type="FunFam" id="3.30.390.10:FF:000001">
    <property type="entry name" value="Enolase"/>
    <property type="match status" value="1"/>
</dbReference>
<dbReference type="Gene3D" id="3.20.20.120">
    <property type="entry name" value="Enolase-like C-terminal domain"/>
    <property type="match status" value="1"/>
</dbReference>
<dbReference type="Gene3D" id="3.30.390.10">
    <property type="entry name" value="Enolase-like, N-terminal domain"/>
    <property type="match status" value="1"/>
</dbReference>
<dbReference type="HAMAP" id="MF_00318">
    <property type="entry name" value="Enolase"/>
    <property type="match status" value="1"/>
</dbReference>
<dbReference type="InterPro" id="IPR000941">
    <property type="entry name" value="Enolase"/>
</dbReference>
<dbReference type="InterPro" id="IPR036849">
    <property type="entry name" value="Enolase-like_C_sf"/>
</dbReference>
<dbReference type="InterPro" id="IPR029017">
    <property type="entry name" value="Enolase-like_N"/>
</dbReference>
<dbReference type="InterPro" id="IPR020810">
    <property type="entry name" value="Enolase_C"/>
</dbReference>
<dbReference type="InterPro" id="IPR020809">
    <property type="entry name" value="Enolase_CS"/>
</dbReference>
<dbReference type="InterPro" id="IPR020811">
    <property type="entry name" value="Enolase_N"/>
</dbReference>
<dbReference type="NCBIfam" id="TIGR01060">
    <property type="entry name" value="eno"/>
    <property type="match status" value="1"/>
</dbReference>
<dbReference type="PANTHER" id="PTHR11902">
    <property type="entry name" value="ENOLASE"/>
    <property type="match status" value="1"/>
</dbReference>
<dbReference type="PANTHER" id="PTHR11902:SF1">
    <property type="entry name" value="ENOLASE"/>
    <property type="match status" value="1"/>
</dbReference>
<dbReference type="Pfam" id="PF00113">
    <property type="entry name" value="Enolase_C"/>
    <property type="match status" value="1"/>
</dbReference>
<dbReference type="Pfam" id="PF03952">
    <property type="entry name" value="Enolase_N"/>
    <property type="match status" value="1"/>
</dbReference>
<dbReference type="PIRSF" id="PIRSF001400">
    <property type="entry name" value="Enolase"/>
    <property type="match status" value="1"/>
</dbReference>
<dbReference type="PRINTS" id="PR00148">
    <property type="entry name" value="ENOLASE"/>
</dbReference>
<dbReference type="SFLD" id="SFLDF00002">
    <property type="entry name" value="enolase"/>
    <property type="match status" value="1"/>
</dbReference>
<dbReference type="SFLD" id="SFLDG00178">
    <property type="entry name" value="enolase"/>
    <property type="match status" value="1"/>
</dbReference>
<dbReference type="SMART" id="SM01192">
    <property type="entry name" value="Enolase_C"/>
    <property type="match status" value="1"/>
</dbReference>
<dbReference type="SMART" id="SM01193">
    <property type="entry name" value="Enolase_N"/>
    <property type="match status" value="1"/>
</dbReference>
<dbReference type="SUPFAM" id="SSF51604">
    <property type="entry name" value="Enolase C-terminal domain-like"/>
    <property type="match status" value="1"/>
</dbReference>
<dbReference type="SUPFAM" id="SSF54826">
    <property type="entry name" value="Enolase N-terminal domain-like"/>
    <property type="match status" value="1"/>
</dbReference>
<dbReference type="PROSITE" id="PS00164">
    <property type="entry name" value="ENOLASE"/>
    <property type="match status" value="1"/>
</dbReference>
<sequence length="422" mass="45809">MTVTIENIHAREIFDSRGNPTVEVDVRLTDGTLGRAAVPSGASTGDREAVELRDGGDRLQGKGVSKAVANVNGEIYEALKGQSPFNQAKLDHLMIELDGTKNKSRLGANAILGVSMAISRAAANSEKIPLYRYLGGVDLELPQPFFNVINGGVHADSGIDVQEFLITPVKRESFRDGLEKIANIYHTLKKILADKGLETAVGDEGGFAPKLGSTENAIATLYQAIESAGYVPGEEIAIAIDPASSEFYDDKEKVYRFEGQKLTSKELLTYYENLVEKYPALISIEDGFSEHDWEGFAAQTKAQGQKIQLVGDDIFVTNPEIFKEGIKKGVANAILIKLNQIGTVTEAIEAISLARKAGYKTMISHRSGETVDSYIADFAVAMHAGQIKTGSMARSERVEKYNQFLRIEEELGKDVALASFPG</sequence>